<keyword id="KW-0010">Activator</keyword>
<keyword id="KW-0158">Chromosome</keyword>
<keyword id="KW-0539">Nucleus</keyword>
<keyword id="KW-1185">Reference proteome</keyword>
<keyword id="KW-0779">Telomere</keyword>
<keyword id="KW-0804">Transcription</keyword>
<keyword id="KW-0805">Transcription regulation</keyword>
<keyword id="KW-0819">tRNA processing</keyword>
<protein>
    <recommendedName>
        <fullName>EKC/KEOPS complex subunit GON7</fullName>
    </recommendedName>
</protein>
<comment type="function">
    <text evidence="1">Component of the EKC/KEOPS complex that is required for the formation of a threonylcarbamoyl group on adenosine at position 37 (t(6)A37) in tRNAs that read codons beginning with adenine. The complex is probably involved in the transfer of the threonylcarbamoyl moiety of threonylcarbamoyl-AMP (TC-AMP) to the N6 group of A37. GON7 likely plays a supporting role to the catalytic subunit KAE1 in the complex. The EKC/KEOPS complex also promotes both telomere uncapping and telomere elongation. The complex is required for efficient recruitment of transcriptional coactivators (By similarity).</text>
</comment>
<comment type="subunit">
    <text evidence="1">Component of the EKC/KEOPS complex composed of at least BUD32, CGI121, GON7, KAE1 and PCC1; the whole complex dimerizes.</text>
</comment>
<comment type="subcellular location">
    <subcellularLocation>
        <location evidence="1">Nucleus</location>
    </subcellularLocation>
    <subcellularLocation>
        <location evidence="1">Chromosome</location>
        <location evidence="1">Telomere</location>
    </subcellularLocation>
</comment>
<comment type="similarity">
    <text evidence="3">Belongs to the GON7 family.</text>
</comment>
<reference key="1">
    <citation type="journal article" date="2004" name="Science">
        <title>The Ashbya gossypii genome as a tool for mapping the ancient Saccharomyces cerevisiae genome.</title>
        <authorList>
            <person name="Dietrich F.S."/>
            <person name="Voegeli S."/>
            <person name="Brachat S."/>
            <person name="Lerch A."/>
            <person name="Gates K."/>
            <person name="Steiner S."/>
            <person name="Mohr C."/>
            <person name="Poehlmann R."/>
            <person name="Luedi P."/>
            <person name="Choi S."/>
            <person name="Wing R.A."/>
            <person name="Flavier A."/>
            <person name="Gaffney T.D."/>
            <person name="Philippsen P."/>
        </authorList>
    </citation>
    <scope>NUCLEOTIDE SEQUENCE [LARGE SCALE GENOMIC DNA]</scope>
    <source>
        <strain>ATCC 10895 / CBS 109.51 / FGSC 9923 / NRRL Y-1056</strain>
    </source>
</reference>
<reference key="2">
    <citation type="journal article" date="2013" name="G3 (Bethesda)">
        <title>Genomes of Ashbya fungi isolated from insects reveal four mating-type loci, numerous translocations, lack of transposons, and distinct gene duplications.</title>
        <authorList>
            <person name="Dietrich F.S."/>
            <person name="Voegeli S."/>
            <person name="Kuo S."/>
            <person name="Philippsen P."/>
        </authorList>
    </citation>
    <scope>GENOME REANNOTATION</scope>
    <source>
        <strain>ATCC 10895 / CBS 109.51 / FGSC 9923 / NRRL Y-1056</strain>
    </source>
</reference>
<gene>
    <name type="primary">GON7</name>
    <name type="ordered locus">AEL144W</name>
</gene>
<sequence>MQPPTATYCTPEGDSHAFTVVPDAPRYRTTDGTTSGPSAYVLQAGQIDRDRPSPPKLDAQGEPTALSRLRMHLTGLQDDINSFLTAEMQRAKNKKQKIDDTQEQRATGGSTAA</sequence>
<feature type="chain" id="PRO_0000278919" description="EKC/KEOPS complex subunit GON7">
    <location>
        <begin position="1"/>
        <end position="113"/>
    </location>
</feature>
<feature type="region of interest" description="Disordered" evidence="2">
    <location>
        <begin position="88"/>
        <end position="113"/>
    </location>
</feature>
<feature type="compositionally biased region" description="Polar residues" evidence="2">
    <location>
        <begin position="104"/>
        <end position="113"/>
    </location>
</feature>
<proteinExistence type="inferred from homology"/>
<dbReference type="EMBL" id="AE016818">
    <property type="protein sequence ID" value="AAS52541.1"/>
    <property type="molecule type" value="Genomic_DNA"/>
</dbReference>
<dbReference type="RefSeq" id="NP_984717.1">
    <property type="nucleotide sequence ID" value="NM_210070.1"/>
</dbReference>
<dbReference type="SMR" id="Q758A4"/>
<dbReference type="FunCoup" id="Q758A4">
    <property type="interactions" value="38"/>
</dbReference>
<dbReference type="STRING" id="284811.Q758A4"/>
<dbReference type="EnsemblFungi" id="AAS52541">
    <property type="protein sequence ID" value="AAS52541"/>
    <property type="gene ID" value="AGOS_AEL144W"/>
</dbReference>
<dbReference type="GeneID" id="4620904"/>
<dbReference type="KEGG" id="ago:AGOS_AEL144W"/>
<dbReference type="eggNOG" id="ENOG502S429">
    <property type="taxonomic scope" value="Eukaryota"/>
</dbReference>
<dbReference type="HOGENOM" id="CLU_151420_1_0_1"/>
<dbReference type="InParanoid" id="Q758A4"/>
<dbReference type="OMA" id="QDHLNIF"/>
<dbReference type="OrthoDB" id="2288868at2759"/>
<dbReference type="Proteomes" id="UP000000591">
    <property type="component" value="Chromosome V"/>
</dbReference>
<dbReference type="GO" id="GO:0000785">
    <property type="term" value="C:chromatin"/>
    <property type="evidence" value="ECO:0007669"/>
    <property type="project" value="EnsemblFungi"/>
</dbReference>
<dbReference type="GO" id="GO:0000781">
    <property type="term" value="C:chromosome, telomeric region"/>
    <property type="evidence" value="ECO:0007669"/>
    <property type="project" value="UniProtKB-SubCell"/>
</dbReference>
<dbReference type="GO" id="GO:0000408">
    <property type="term" value="C:EKC/KEOPS complex"/>
    <property type="evidence" value="ECO:0007669"/>
    <property type="project" value="EnsemblFungi"/>
</dbReference>
<dbReference type="GO" id="GO:0005634">
    <property type="term" value="C:nucleus"/>
    <property type="evidence" value="ECO:0007669"/>
    <property type="project" value="UniProtKB-SubCell"/>
</dbReference>
<dbReference type="GO" id="GO:0031490">
    <property type="term" value="F:chromatin DNA binding"/>
    <property type="evidence" value="ECO:0007669"/>
    <property type="project" value="EnsemblFungi"/>
</dbReference>
<dbReference type="GO" id="GO:0000032">
    <property type="term" value="P:cell wall mannoprotein biosynthetic process"/>
    <property type="evidence" value="ECO:0007669"/>
    <property type="project" value="EnsemblFungi"/>
</dbReference>
<dbReference type="GO" id="GO:0045944">
    <property type="term" value="P:positive regulation of transcription by RNA polymerase II"/>
    <property type="evidence" value="ECO:0007669"/>
    <property type="project" value="EnsemblFungi"/>
</dbReference>
<dbReference type="GO" id="GO:0000722">
    <property type="term" value="P:telomere maintenance via recombination"/>
    <property type="evidence" value="ECO:0007669"/>
    <property type="project" value="EnsemblFungi"/>
</dbReference>
<dbReference type="GO" id="GO:0008033">
    <property type="term" value="P:tRNA processing"/>
    <property type="evidence" value="ECO:0007669"/>
    <property type="project" value="UniProtKB-KW"/>
</dbReference>
<dbReference type="InterPro" id="IPR014849">
    <property type="entry name" value="EKC/KEOPS_Gon7"/>
</dbReference>
<dbReference type="Pfam" id="PF08738">
    <property type="entry name" value="Gon7"/>
    <property type="match status" value="1"/>
</dbReference>
<name>GON7_EREGS</name>
<organism>
    <name type="scientific">Eremothecium gossypii (strain ATCC 10895 / CBS 109.51 / FGSC 9923 / NRRL Y-1056)</name>
    <name type="common">Yeast</name>
    <name type="synonym">Ashbya gossypii</name>
    <dbReference type="NCBI Taxonomy" id="284811"/>
    <lineage>
        <taxon>Eukaryota</taxon>
        <taxon>Fungi</taxon>
        <taxon>Dikarya</taxon>
        <taxon>Ascomycota</taxon>
        <taxon>Saccharomycotina</taxon>
        <taxon>Saccharomycetes</taxon>
        <taxon>Saccharomycetales</taxon>
        <taxon>Saccharomycetaceae</taxon>
        <taxon>Eremothecium</taxon>
    </lineage>
</organism>
<accession>Q758A4</accession>
<evidence type="ECO:0000250" key="1"/>
<evidence type="ECO:0000256" key="2">
    <source>
        <dbReference type="SAM" id="MobiDB-lite"/>
    </source>
</evidence>
<evidence type="ECO:0000305" key="3"/>